<evidence type="ECO:0000255" key="1">
    <source>
        <dbReference type="PROSITE-ProRule" id="PRU00472"/>
    </source>
</evidence>
<evidence type="ECO:0000305" key="2"/>
<dbReference type="EMBL" id="DQ643392">
    <property type="protein sequence ID" value="ABF82085.1"/>
    <property type="molecule type" value="Genomic_DNA"/>
</dbReference>
<dbReference type="RefSeq" id="YP_654627.1">
    <property type="nucleotide sequence ID" value="NC_008187.1"/>
</dbReference>
<dbReference type="SMR" id="Q197A5"/>
<dbReference type="KEGG" id="vg:4156305"/>
<dbReference type="OrthoDB" id="23494at10239"/>
<dbReference type="Proteomes" id="UP000001358">
    <property type="component" value="Genome"/>
</dbReference>
<dbReference type="GO" id="GO:0003676">
    <property type="term" value="F:nucleic acid binding"/>
    <property type="evidence" value="ECO:0007669"/>
    <property type="project" value="InterPro"/>
</dbReference>
<dbReference type="GO" id="GO:0008270">
    <property type="term" value="F:zinc ion binding"/>
    <property type="evidence" value="ECO:0007669"/>
    <property type="project" value="UniProtKB-KW"/>
</dbReference>
<dbReference type="GO" id="GO:0006351">
    <property type="term" value="P:DNA-templated transcription"/>
    <property type="evidence" value="ECO:0007669"/>
    <property type="project" value="InterPro"/>
</dbReference>
<dbReference type="Gene3D" id="2.20.25.10">
    <property type="match status" value="1"/>
</dbReference>
<dbReference type="InterPro" id="IPR001222">
    <property type="entry name" value="Znf_TFIIS"/>
</dbReference>
<dbReference type="Pfam" id="PF01096">
    <property type="entry name" value="Zn_ribbon_TFIIS"/>
    <property type="match status" value="1"/>
</dbReference>
<dbReference type="SMART" id="SM00440">
    <property type="entry name" value="ZnF_C2C2"/>
    <property type="match status" value="1"/>
</dbReference>
<dbReference type="SUPFAM" id="SSF57783">
    <property type="entry name" value="Zinc beta-ribbon"/>
    <property type="match status" value="1"/>
</dbReference>
<dbReference type="PROSITE" id="PS51133">
    <property type="entry name" value="ZF_TFIIS_2"/>
    <property type="match status" value="1"/>
</dbReference>
<organismHost>
    <name type="scientific">Aedes vexans</name>
    <name type="common">Inland floodwater mosquito</name>
    <name type="synonym">Culex vexans</name>
    <dbReference type="NCBI Taxonomy" id="7163"/>
</organismHost>
<organismHost>
    <name type="scientific">Culex territans</name>
    <dbReference type="NCBI Taxonomy" id="42431"/>
</organismHost>
<organismHost>
    <name type="scientific">Culiseta annulata</name>
    <dbReference type="NCBI Taxonomy" id="332058"/>
</organismHost>
<organismHost>
    <name type="scientific">Ochlerotatus sollicitans</name>
    <name type="common">eastern saltmarsh mosquito</name>
    <dbReference type="NCBI Taxonomy" id="310513"/>
</organismHost>
<organismHost>
    <name type="scientific">Ochlerotatus taeniorhynchus</name>
    <name type="common">Black salt marsh mosquito</name>
    <name type="synonym">Aedes taeniorhynchus</name>
    <dbReference type="NCBI Taxonomy" id="329105"/>
</organismHost>
<organismHost>
    <name type="scientific">Psorophora ferox</name>
    <dbReference type="NCBI Taxonomy" id="7183"/>
</organismHost>
<keyword id="KW-0479">Metal-binding</keyword>
<keyword id="KW-1185">Reference proteome</keyword>
<keyword id="KW-0862">Zinc</keyword>
<keyword id="KW-0863">Zinc-finger</keyword>
<protein>
    <recommendedName>
        <fullName>Putative transcription elongation factor S-II-like protein 055R</fullName>
    </recommendedName>
</protein>
<sequence length="137" mass="15913">MDQTNLRRCLATYFGDEKNINHILKKTAGPDQMVQIYQILTTIENPSHSEQDNFRRAVTMVKQNQLGWGHPIFQPEQQKISEENDFITCPYEVSEGVLRCGKCDCTKILWFSKQTRSMDEPTTIFASCSNCKTRWTE</sequence>
<comment type="similarity">
    <text evidence="2">Belongs to the IIV-6 349L family.</text>
</comment>
<feature type="chain" id="PRO_0000377766" description="Putative transcription elongation factor S-II-like protein 055R">
    <location>
        <begin position="1"/>
        <end position="137"/>
    </location>
</feature>
<feature type="zinc finger region" description="TFIIS-type" evidence="1">
    <location>
        <begin position="85"/>
        <end position="136"/>
    </location>
</feature>
<feature type="binding site" evidence="1">
    <location>
        <position position="89"/>
    </location>
    <ligand>
        <name>Zn(2+)</name>
        <dbReference type="ChEBI" id="CHEBI:29105"/>
    </ligand>
</feature>
<feature type="binding site" evidence="1">
    <location>
        <position position="103"/>
    </location>
    <ligand>
        <name>Zn(2+)</name>
        <dbReference type="ChEBI" id="CHEBI:29105"/>
    </ligand>
</feature>
<feature type="binding site" evidence="1">
    <location>
        <position position="128"/>
    </location>
    <ligand>
        <name>Zn(2+)</name>
        <dbReference type="ChEBI" id="CHEBI:29105"/>
    </ligand>
</feature>
<feature type="binding site" evidence="1">
    <location>
        <position position="131"/>
    </location>
    <ligand>
        <name>Zn(2+)</name>
        <dbReference type="ChEBI" id="CHEBI:29105"/>
    </ligand>
</feature>
<gene>
    <name type="ORF">IIV3-055R</name>
</gene>
<name>VF349_IIV3</name>
<organism>
    <name type="scientific">Invertebrate iridescent virus 3</name>
    <name type="common">IIV-3</name>
    <name type="synonym">Mosquito iridescent virus</name>
    <dbReference type="NCBI Taxonomy" id="345201"/>
    <lineage>
        <taxon>Viruses</taxon>
        <taxon>Varidnaviria</taxon>
        <taxon>Bamfordvirae</taxon>
        <taxon>Nucleocytoviricota</taxon>
        <taxon>Megaviricetes</taxon>
        <taxon>Pimascovirales</taxon>
        <taxon>Iridoviridae</taxon>
        <taxon>Betairidovirinae</taxon>
        <taxon>Chloriridovirus</taxon>
    </lineage>
</organism>
<proteinExistence type="inferred from homology"/>
<accession>Q197A5</accession>
<reference key="1">
    <citation type="journal article" date="2006" name="J. Virol.">
        <title>Genome of invertebrate iridescent virus type 3 (mosquito iridescent virus).</title>
        <authorList>
            <person name="Delhon G."/>
            <person name="Tulman E.R."/>
            <person name="Afonso C.L."/>
            <person name="Lu Z."/>
            <person name="Becnel J.J."/>
            <person name="Moser B.A."/>
            <person name="Kutish G.F."/>
            <person name="Rock D.L."/>
        </authorList>
    </citation>
    <scope>NUCLEOTIDE SEQUENCE [LARGE SCALE GENOMIC DNA]</scope>
</reference>